<dbReference type="EC" id="2.1.3.3"/>
<dbReference type="EMBL" id="X64871">
    <property type="protein sequence ID" value="CAA46083.1"/>
    <property type="molecule type" value="Genomic_DNA"/>
</dbReference>
<dbReference type="EMBL" id="AJ223884">
    <property type="protein sequence ID" value="CAA11615.1"/>
    <property type="molecule type" value="Genomic_DNA"/>
</dbReference>
<dbReference type="EMBL" id="AJ223885">
    <property type="protein sequence ID" value="CAA11616.1"/>
    <property type="molecule type" value="Genomic_DNA"/>
</dbReference>
<dbReference type="EMBL" id="AJ223886">
    <property type="protein sequence ID" value="CAA11617.1"/>
    <property type="molecule type" value="Genomic_DNA"/>
</dbReference>
<dbReference type="EMBL" id="AJ223887">
    <property type="protein sequence ID" value="CAA11618.1"/>
    <property type="molecule type" value="Genomic_DNA"/>
</dbReference>
<dbReference type="EMBL" id="Y10876">
    <property type="protein sequence ID" value="CAA71826.1"/>
    <property type="molecule type" value="Genomic_DNA"/>
</dbReference>
<dbReference type="EMBL" id="Y10877">
    <property type="protein sequence ID" value="CAA71827.1"/>
    <property type="molecule type" value="Genomic_DNA"/>
</dbReference>
<dbReference type="PIR" id="S24723">
    <property type="entry name" value="S24723"/>
</dbReference>
<dbReference type="SMR" id="Q01324"/>
<dbReference type="STRING" id="486.B2G52_10125"/>
<dbReference type="UniPathway" id="UPA00068">
    <property type="reaction ID" value="UER00112"/>
</dbReference>
<dbReference type="GO" id="GO:0005737">
    <property type="term" value="C:cytoplasm"/>
    <property type="evidence" value="ECO:0007669"/>
    <property type="project" value="UniProtKB-SubCell"/>
</dbReference>
<dbReference type="GO" id="GO:0016597">
    <property type="term" value="F:amino acid binding"/>
    <property type="evidence" value="ECO:0007669"/>
    <property type="project" value="InterPro"/>
</dbReference>
<dbReference type="GO" id="GO:0004585">
    <property type="term" value="F:ornithine carbamoyltransferase activity"/>
    <property type="evidence" value="ECO:0007669"/>
    <property type="project" value="UniProtKB-EC"/>
</dbReference>
<dbReference type="GO" id="GO:0042450">
    <property type="term" value="P:arginine biosynthetic process via ornithine"/>
    <property type="evidence" value="ECO:0007669"/>
    <property type="project" value="TreeGrafter"/>
</dbReference>
<dbReference type="GO" id="GO:0019240">
    <property type="term" value="P:citrulline biosynthetic process"/>
    <property type="evidence" value="ECO:0007669"/>
    <property type="project" value="TreeGrafter"/>
</dbReference>
<dbReference type="GO" id="GO:0006526">
    <property type="term" value="P:L-arginine biosynthetic process"/>
    <property type="evidence" value="ECO:0007669"/>
    <property type="project" value="UniProtKB-UniPathway"/>
</dbReference>
<dbReference type="FunFam" id="3.40.50.1370:FF:000004">
    <property type="entry name" value="Ornithine carbamoyltransferase"/>
    <property type="match status" value="1"/>
</dbReference>
<dbReference type="Gene3D" id="3.40.50.1370">
    <property type="entry name" value="Aspartate/ornithine carbamoyltransferase"/>
    <property type="match status" value="2"/>
</dbReference>
<dbReference type="InterPro" id="IPR006132">
    <property type="entry name" value="Asp/Orn_carbamoyltranf_P-bd"/>
</dbReference>
<dbReference type="InterPro" id="IPR006130">
    <property type="entry name" value="Asp/Orn_carbamoylTrfase"/>
</dbReference>
<dbReference type="InterPro" id="IPR036901">
    <property type="entry name" value="Asp/Orn_carbamoylTrfase_sf"/>
</dbReference>
<dbReference type="InterPro" id="IPR006131">
    <property type="entry name" value="Asp_carbamoyltransf_Asp/Orn-bd"/>
</dbReference>
<dbReference type="InterPro" id="IPR002292">
    <property type="entry name" value="Orn/put_carbamltrans"/>
</dbReference>
<dbReference type="NCBIfam" id="TIGR00658">
    <property type="entry name" value="orni_carb_tr"/>
    <property type="match status" value="1"/>
</dbReference>
<dbReference type="PANTHER" id="PTHR45753:SF2">
    <property type="entry name" value="ORNITHINE CARBAMOYLTRANSFERASE"/>
    <property type="match status" value="1"/>
</dbReference>
<dbReference type="PANTHER" id="PTHR45753">
    <property type="entry name" value="ORNITHINE CARBAMOYLTRANSFERASE, MITOCHONDRIAL"/>
    <property type="match status" value="1"/>
</dbReference>
<dbReference type="Pfam" id="PF00185">
    <property type="entry name" value="OTCace"/>
    <property type="match status" value="1"/>
</dbReference>
<dbReference type="Pfam" id="PF02729">
    <property type="entry name" value="OTCace_N"/>
    <property type="match status" value="1"/>
</dbReference>
<dbReference type="PRINTS" id="PR00100">
    <property type="entry name" value="AOTCASE"/>
</dbReference>
<dbReference type="PRINTS" id="PR00102">
    <property type="entry name" value="OTCASE"/>
</dbReference>
<dbReference type="SUPFAM" id="SSF53671">
    <property type="entry name" value="Aspartate/ornithine carbamoyltransferase"/>
    <property type="match status" value="1"/>
</dbReference>
<proteinExistence type="inferred from homology"/>
<evidence type="ECO:0000250" key="1"/>
<evidence type="ECO:0000305" key="2"/>
<keyword id="KW-0028">Amino-acid biosynthesis</keyword>
<keyword id="KW-0055">Arginine biosynthesis</keyword>
<keyword id="KW-0963">Cytoplasm</keyword>
<keyword id="KW-0808">Transferase</keyword>
<sequence length="262" mass="28665">KTSTRTRCAFEVAARDQGAGVTYLESSASQIGHKESIKDTARVLGRMYDAIEYRGFGQETVEELAKYAGVPVFNGLTNEFHPTQMLADALTMREHGGKPLNQTSFAYVGDARYNMGNSLLILGAKLGMDVRIGAPEGLWPSEGIIAAANAVAEETGAKITLTANPQEAVKGVGFIHTDVWVSMGEPKEIWQERIDLLKDYRVTSELMAASGNPQVKFMHCLPAFHNRETKIGEWIYETFGLNGVEVTEEVFESPAGIVFDQA</sequence>
<reference key="1">
    <citation type="journal article" date="1992" name="Mol. Microbiol.">
        <title>Sequence diversity within the argF, fbp and recA genes of natural isolates of Neisseria meningitidis: interspecies recombination within the argF gene.</title>
        <authorList>
            <person name="Zhou J."/>
            <person name="Spratt B.G."/>
        </authorList>
    </citation>
    <scope>NUCLEOTIDE SEQUENCE [GENOMIC DNA]</scope>
    <source>
        <strain>ATCC 23970 / DSM 4691 / CCUG 5853 / CIP 72.17 / NCTC 10617 / NCDC A7515</strain>
    </source>
</reference>
<reference key="2">
    <citation type="journal article" date="1999" name="Mol. Biol. Evol.">
        <title>Networks and groups within the genus Neisseria: analysis of argF, recA, rho, and 16S rRNA sequences from human Neisseria species.</title>
        <authorList>
            <person name="Smith N.H."/>
            <person name="Holmes E.C."/>
            <person name="Donovan G.M."/>
            <person name="Carpenter G.A."/>
            <person name="Spratt B.G."/>
        </authorList>
    </citation>
    <scope>NUCLEOTIDE SEQUENCE [GENOMIC DNA] OF 16-247</scope>
    <source>
        <strain>ATCC 23971 / CIP 102541 / NCTC 10618 / NCDC A5906</strain>
        <strain>CCUC 7757</strain>
        <strain>CCUG 7852</strain>
        <strain>LCDC 77-143</strain>
        <strain>LCDC 80-111</strain>
        <strain>LCDC 845</strain>
    </source>
</reference>
<organism>
    <name type="scientific">Neisseria lactamica</name>
    <dbReference type="NCBI Taxonomy" id="486"/>
    <lineage>
        <taxon>Bacteria</taxon>
        <taxon>Pseudomonadati</taxon>
        <taxon>Pseudomonadota</taxon>
        <taxon>Betaproteobacteria</taxon>
        <taxon>Neisseriales</taxon>
        <taxon>Neisseriaceae</taxon>
        <taxon>Neisseria</taxon>
    </lineage>
</organism>
<feature type="chain" id="PRO_0000112963" description="Ornithine carbamoyltransferase">
    <location>
        <begin position="1" status="less than"/>
        <end position="262" status="greater than"/>
    </location>
</feature>
<feature type="binding site" evidence="1">
    <location>
        <begin position="3"/>
        <end position="7"/>
    </location>
    <ligand>
        <name>carbamoyl phosphate</name>
        <dbReference type="ChEBI" id="CHEBI:58228"/>
    </ligand>
</feature>
<feature type="binding site" evidence="1">
    <location>
        <position position="30"/>
    </location>
    <ligand>
        <name>carbamoyl phosphate</name>
        <dbReference type="ChEBI" id="CHEBI:58228"/>
    </ligand>
</feature>
<feature type="binding site" evidence="1">
    <location>
        <position position="54"/>
    </location>
    <ligand>
        <name>carbamoyl phosphate</name>
        <dbReference type="ChEBI" id="CHEBI:58228"/>
    </ligand>
</feature>
<feature type="binding site" evidence="1">
    <location>
        <begin position="81"/>
        <end position="84"/>
    </location>
    <ligand>
        <name>carbamoyl phosphate</name>
        <dbReference type="ChEBI" id="CHEBI:58228"/>
    </ligand>
</feature>
<feature type="binding site" evidence="1">
    <location>
        <position position="114"/>
    </location>
    <ligand>
        <name>L-ornithine</name>
        <dbReference type="ChEBI" id="CHEBI:46911"/>
    </ligand>
</feature>
<feature type="binding site" evidence="1">
    <location>
        <position position="178"/>
    </location>
    <ligand>
        <name>L-ornithine</name>
        <dbReference type="ChEBI" id="CHEBI:46911"/>
    </ligand>
</feature>
<feature type="binding site" evidence="1">
    <location>
        <begin position="182"/>
        <end position="183"/>
    </location>
    <ligand>
        <name>L-ornithine</name>
        <dbReference type="ChEBI" id="CHEBI:46911"/>
    </ligand>
</feature>
<feature type="binding site" evidence="1">
    <location>
        <begin position="219"/>
        <end position="222"/>
    </location>
    <ligand>
        <name>carbamoyl phosphate</name>
        <dbReference type="ChEBI" id="CHEBI:58228"/>
    </ligand>
</feature>
<feature type="binding site" evidence="1">
    <location>
        <position position="247"/>
    </location>
    <ligand>
        <name>carbamoyl phosphate</name>
        <dbReference type="ChEBI" id="CHEBI:58228"/>
    </ligand>
</feature>
<feature type="site" description="Important for structural integrity" evidence="1">
    <location>
        <position position="94"/>
    </location>
</feature>
<feature type="sequence variant" description="In strain: CCUC 7757 and LCDC 845.">
    <original>S</original>
    <variation>P</variation>
    <location>
        <position position="26"/>
    </location>
</feature>
<feature type="sequence variant" description="In strain: CCUC 7757.">
    <original>S</original>
    <variation>R</variation>
    <location>
        <position position="36"/>
    </location>
</feature>
<feature type="sequence variant" description="In strain: CCUC 7757 and LCDC 845.">
    <original>T</original>
    <variation>V</variation>
    <location>
        <position position="60"/>
    </location>
</feature>
<feature type="sequence variant" description="In strain: CCUC 7757 and LCDC 845.">
    <original>G</original>
    <variation>S</variation>
    <location>
        <position position="96"/>
    </location>
</feature>
<feature type="sequence variant" description="In strain: CCUC 7757 and LCDC 845.">
    <original>T</original>
    <variation>I</variation>
    <location>
        <position position="103"/>
    </location>
</feature>
<feature type="sequence variant" description="In strain: CCUC 7757 and LCDC 845.">
    <original>EG</original>
    <variation>QS</variation>
    <location>
        <begin position="136"/>
        <end position="137"/>
    </location>
</feature>
<feature type="sequence variant" description="In strain: CCUG 7852.">
    <original>P</original>
    <variation>A</variation>
    <location>
        <position position="140"/>
    </location>
</feature>
<feature type="sequence variant" description="In strain: LCDC 845.">
    <original>NAVAE</original>
    <variation>HAAAK</variation>
    <location>
        <begin position="149"/>
        <end position="153"/>
    </location>
</feature>
<feature type="sequence variant" description="In strain: CCUC 7757.">
    <original>NAV</original>
    <variation>HAA</variation>
    <location>
        <begin position="149"/>
        <end position="151"/>
    </location>
</feature>
<feature type="sequence variant" description="In strain: LCDC 77-143.">
    <original>A</original>
    <variation>R</variation>
    <location>
        <position position="150"/>
    </location>
</feature>
<feature type="sequence variant" description="In strain: CCUC 7757 and LCDC 845.">
    <original>ANP</original>
    <variation>ENA</variation>
    <location>
        <begin position="163"/>
        <end position="165"/>
    </location>
</feature>
<feature type="sequence variant" description="In strain: CCUC 7757 and LCDC 845.">
    <original>GVG</original>
    <variation>NVD</variation>
    <location>
        <begin position="171"/>
        <end position="173"/>
    </location>
</feature>
<feature type="sequence variant" description="In strain: CCUC 7757, CCUG 7852, LCDC 80-111 and LCDC 845.">
    <original>I</original>
    <variation>V</variation>
    <location>
        <position position="189"/>
    </location>
</feature>
<feature type="sequence variant" description="In strain: CCUC 7757 and LCDC 845.">
    <original>D</original>
    <variation>N</variation>
    <location>
        <position position="199"/>
    </location>
</feature>
<feature type="sequence variant" description="In strain: CCUC 7757 and LCDC 845.">
    <original>S</original>
    <variation>P</variation>
    <location>
        <position position="204"/>
    </location>
</feature>
<feature type="sequence variant" description="In strain: CCUG 7852 and LCDC 80-111.">
    <original>Q</original>
    <variation>K</variation>
    <location>
        <position position="214"/>
    </location>
</feature>
<feature type="sequence variant" description="In strain: CCUC 7757 and LCDC 845.">
    <original>I</original>
    <variation>V</variation>
    <location>
        <position position="231"/>
    </location>
</feature>
<feature type="non-terminal residue">
    <location>
        <position position="1"/>
    </location>
</feature>
<feature type="non-terminal residue">
    <location>
        <position position="262"/>
    </location>
</feature>
<name>OTC_NEILA</name>
<accession>Q01324</accession>
<accession>O86391</accession>
<accession>P95366</accession>
<accession>P95367</accession>
<accession>Q9R813</accession>
<accession>Q9R814</accession>
<protein>
    <recommendedName>
        <fullName>Ornithine carbamoyltransferase</fullName>
        <shortName>OTCase</shortName>
        <ecNumber>2.1.3.3</ecNumber>
    </recommendedName>
</protein>
<gene>
    <name type="primary">argF</name>
</gene>
<comment type="function">
    <text evidence="1">Reversibly catalyzes the transfer of the carbamoyl group from carbamoyl phosphate (CP) to the N(epsilon) atom of ornithine (ORN) to produce L-citrulline.</text>
</comment>
<comment type="catalytic activity">
    <reaction>
        <text>carbamoyl phosphate + L-ornithine = L-citrulline + phosphate + H(+)</text>
        <dbReference type="Rhea" id="RHEA:19513"/>
        <dbReference type="ChEBI" id="CHEBI:15378"/>
        <dbReference type="ChEBI" id="CHEBI:43474"/>
        <dbReference type="ChEBI" id="CHEBI:46911"/>
        <dbReference type="ChEBI" id="CHEBI:57743"/>
        <dbReference type="ChEBI" id="CHEBI:58228"/>
        <dbReference type="EC" id="2.1.3.3"/>
    </reaction>
</comment>
<comment type="pathway">
    <text>Amino-acid biosynthesis; L-arginine biosynthesis; L-arginine from L-ornithine and carbamoyl phosphate: step 1/3.</text>
</comment>
<comment type="subcellular location">
    <subcellularLocation>
        <location evidence="1">Cytoplasm</location>
    </subcellularLocation>
</comment>
<comment type="similarity">
    <text evidence="2">Belongs to the aspartate/ornithine carbamoyltransferase superfamily. OTCase family.</text>
</comment>